<reference key="1">
    <citation type="journal article" date="2004" name="Genome Res.">
        <title>The status, quality, and expansion of the NIH full-length cDNA project: the Mammalian Gene Collection (MGC).</title>
        <authorList>
            <consortium name="The MGC Project Team"/>
        </authorList>
    </citation>
    <scope>NUCLEOTIDE SEQUENCE [LARGE SCALE MRNA]</scope>
    <source>
        <tissue>Testis</tissue>
    </source>
</reference>
<keyword id="KW-0067">ATP-binding</keyword>
<keyword id="KW-0347">Helicase</keyword>
<keyword id="KW-0378">Hydrolase</keyword>
<keyword id="KW-0547">Nucleotide-binding</keyword>
<keyword id="KW-1185">Reference proteome</keyword>
<evidence type="ECO:0000250" key="1"/>
<evidence type="ECO:0000255" key="2">
    <source>
        <dbReference type="PROSITE-ProRule" id="PRU00541"/>
    </source>
</evidence>
<evidence type="ECO:0000255" key="3">
    <source>
        <dbReference type="PROSITE-ProRule" id="PRU00542"/>
    </source>
</evidence>
<evidence type="ECO:0000256" key="4">
    <source>
        <dbReference type="SAM" id="MobiDB-lite"/>
    </source>
</evidence>
<evidence type="ECO:0000305" key="5"/>
<gene>
    <name type="primary">Dhx40</name>
</gene>
<organism>
    <name type="scientific">Rattus norvegicus</name>
    <name type="common">Rat</name>
    <dbReference type="NCBI Taxonomy" id="10116"/>
    <lineage>
        <taxon>Eukaryota</taxon>
        <taxon>Metazoa</taxon>
        <taxon>Chordata</taxon>
        <taxon>Craniata</taxon>
        <taxon>Vertebrata</taxon>
        <taxon>Euteleostomi</taxon>
        <taxon>Mammalia</taxon>
        <taxon>Eutheria</taxon>
        <taxon>Euarchontoglires</taxon>
        <taxon>Glires</taxon>
        <taxon>Rodentia</taxon>
        <taxon>Myomorpha</taxon>
        <taxon>Muroidea</taxon>
        <taxon>Muridae</taxon>
        <taxon>Murinae</taxon>
        <taxon>Rattus</taxon>
    </lineage>
</organism>
<dbReference type="EC" id="3.6.4.13"/>
<dbReference type="EMBL" id="BC083821">
    <property type="protein sequence ID" value="AAH83821.1"/>
    <property type="molecule type" value="mRNA"/>
</dbReference>
<dbReference type="RefSeq" id="NP_001005873.1">
    <property type="nucleotide sequence ID" value="NM_001005873.1"/>
</dbReference>
<dbReference type="SMR" id="Q5XI69"/>
<dbReference type="FunCoup" id="Q5XI69">
    <property type="interactions" value="1794"/>
</dbReference>
<dbReference type="STRING" id="10116.ENSRNOP00000075131"/>
<dbReference type="PhosphoSitePlus" id="Q5XI69"/>
<dbReference type="jPOST" id="Q5XI69"/>
<dbReference type="PaxDb" id="10116-ENSRNOP00000006926"/>
<dbReference type="GeneID" id="287595"/>
<dbReference type="KEGG" id="rno:287595"/>
<dbReference type="AGR" id="RGD:1359618"/>
<dbReference type="CTD" id="79665"/>
<dbReference type="RGD" id="1359618">
    <property type="gene designation" value="Dhx40"/>
</dbReference>
<dbReference type="VEuPathDB" id="HostDB:ENSRNOG00000004549"/>
<dbReference type="eggNOG" id="KOG0922">
    <property type="taxonomic scope" value="Eukaryota"/>
</dbReference>
<dbReference type="InParanoid" id="Q5XI69"/>
<dbReference type="OrthoDB" id="10253254at2759"/>
<dbReference type="PhylomeDB" id="Q5XI69"/>
<dbReference type="TreeFam" id="TF332290"/>
<dbReference type="PRO" id="PR:Q5XI69"/>
<dbReference type="Proteomes" id="UP000002494">
    <property type="component" value="Chromosome 10"/>
</dbReference>
<dbReference type="Bgee" id="ENSRNOG00000004549">
    <property type="expression patterns" value="Expressed in testis and 20 other cell types or tissues"/>
</dbReference>
<dbReference type="GO" id="GO:0005681">
    <property type="term" value="C:spliceosomal complex"/>
    <property type="evidence" value="ECO:0000318"/>
    <property type="project" value="GO_Central"/>
</dbReference>
<dbReference type="GO" id="GO:0034458">
    <property type="term" value="F:3'-5' RNA helicase activity"/>
    <property type="evidence" value="ECO:0000318"/>
    <property type="project" value="GO_Central"/>
</dbReference>
<dbReference type="GO" id="GO:0005524">
    <property type="term" value="F:ATP binding"/>
    <property type="evidence" value="ECO:0007669"/>
    <property type="project" value="UniProtKB-KW"/>
</dbReference>
<dbReference type="GO" id="GO:0016887">
    <property type="term" value="F:ATP hydrolysis activity"/>
    <property type="evidence" value="ECO:0007669"/>
    <property type="project" value="RHEA"/>
</dbReference>
<dbReference type="GO" id="GO:0003723">
    <property type="term" value="F:RNA binding"/>
    <property type="evidence" value="ECO:0000318"/>
    <property type="project" value="GO_Central"/>
</dbReference>
<dbReference type="GO" id="GO:0000398">
    <property type="term" value="P:mRNA splicing, via spliceosome"/>
    <property type="evidence" value="ECO:0000318"/>
    <property type="project" value="GO_Central"/>
</dbReference>
<dbReference type="CDD" id="cd17984">
    <property type="entry name" value="DEXHc_DHX40"/>
    <property type="match status" value="1"/>
</dbReference>
<dbReference type="CDD" id="cd18791">
    <property type="entry name" value="SF2_C_RHA"/>
    <property type="match status" value="1"/>
</dbReference>
<dbReference type="FunFam" id="1.20.120.1080:FF:000009">
    <property type="entry name" value="Probable ATP-dependent RNA helicase DHX40"/>
    <property type="match status" value="1"/>
</dbReference>
<dbReference type="FunFam" id="3.40.50.300:FF:000145">
    <property type="entry name" value="probable ATP-dependent RNA helicase DHX40"/>
    <property type="match status" value="1"/>
</dbReference>
<dbReference type="FunFam" id="3.40.50.300:FF:001082">
    <property type="entry name" value="probable ATP-dependent RNA helicase DHX40"/>
    <property type="match status" value="1"/>
</dbReference>
<dbReference type="Gene3D" id="1.20.120.1080">
    <property type="match status" value="1"/>
</dbReference>
<dbReference type="Gene3D" id="3.40.50.300">
    <property type="entry name" value="P-loop containing nucleotide triphosphate hydrolases"/>
    <property type="match status" value="2"/>
</dbReference>
<dbReference type="InterPro" id="IPR011709">
    <property type="entry name" value="DEAD-box_helicase_OB_fold"/>
</dbReference>
<dbReference type="InterPro" id="IPR011545">
    <property type="entry name" value="DEAD/DEAH_box_helicase_dom"/>
</dbReference>
<dbReference type="InterPro" id="IPR002464">
    <property type="entry name" value="DNA/RNA_helicase_DEAH_CS"/>
</dbReference>
<dbReference type="InterPro" id="IPR048333">
    <property type="entry name" value="HA2_WH"/>
</dbReference>
<dbReference type="InterPro" id="IPR007502">
    <property type="entry name" value="Helicase-assoc_dom"/>
</dbReference>
<dbReference type="InterPro" id="IPR014001">
    <property type="entry name" value="Helicase_ATP-bd"/>
</dbReference>
<dbReference type="InterPro" id="IPR001650">
    <property type="entry name" value="Helicase_C-like"/>
</dbReference>
<dbReference type="InterPro" id="IPR027417">
    <property type="entry name" value="P-loop_NTPase"/>
</dbReference>
<dbReference type="PANTHER" id="PTHR18934">
    <property type="entry name" value="ATP-DEPENDENT RNA HELICASE"/>
    <property type="match status" value="1"/>
</dbReference>
<dbReference type="PANTHER" id="PTHR18934:SF271">
    <property type="entry name" value="ATP-DEPENDENT RNA HELICASE DHX40-RELATED"/>
    <property type="match status" value="1"/>
</dbReference>
<dbReference type="Pfam" id="PF00270">
    <property type="entry name" value="DEAD"/>
    <property type="match status" value="1"/>
</dbReference>
<dbReference type="Pfam" id="PF21010">
    <property type="entry name" value="HA2_C"/>
    <property type="match status" value="1"/>
</dbReference>
<dbReference type="Pfam" id="PF04408">
    <property type="entry name" value="HA2_N"/>
    <property type="match status" value="1"/>
</dbReference>
<dbReference type="Pfam" id="PF00271">
    <property type="entry name" value="Helicase_C"/>
    <property type="match status" value="1"/>
</dbReference>
<dbReference type="Pfam" id="PF07717">
    <property type="entry name" value="OB_NTP_bind"/>
    <property type="match status" value="1"/>
</dbReference>
<dbReference type="SMART" id="SM00487">
    <property type="entry name" value="DEXDc"/>
    <property type="match status" value="1"/>
</dbReference>
<dbReference type="SMART" id="SM00847">
    <property type="entry name" value="HA2"/>
    <property type="match status" value="1"/>
</dbReference>
<dbReference type="SMART" id="SM00490">
    <property type="entry name" value="HELICc"/>
    <property type="match status" value="1"/>
</dbReference>
<dbReference type="SUPFAM" id="SSF52540">
    <property type="entry name" value="P-loop containing nucleoside triphosphate hydrolases"/>
    <property type="match status" value="1"/>
</dbReference>
<dbReference type="PROSITE" id="PS00690">
    <property type="entry name" value="DEAH_ATP_HELICASE"/>
    <property type="match status" value="1"/>
</dbReference>
<dbReference type="PROSITE" id="PS51192">
    <property type="entry name" value="HELICASE_ATP_BIND_1"/>
    <property type="match status" value="1"/>
</dbReference>
<dbReference type="PROSITE" id="PS51194">
    <property type="entry name" value="HELICASE_CTER"/>
    <property type="match status" value="1"/>
</dbReference>
<sequence>MSRFPAVAGRAPRRQEEGERPVELQEERPSAVRIADREEKGCTSQEGGTTPTFPIQKQRKKLIQAVRDNSFLIVTGNTGSGKTTQLPKYLYEAGFSQHGMIGVTQPRKVAAISVAQRVAEEMKCTLGSKVGYQVRFDDCSSKETAIKYMTDGCLLKHILGDPNLNKFSVIILDEAHERTLTTDILFGLLKKLFQDKSPNRKEHLKVVVMSATMELAKLSAFFGNCPIFDIPGRLYPVREKFCNLIGPRDRENTAYIQAIVKVTMDIHLNEMAGDILVFLTGQFEIEKSCELLFQMAESVDYDYDVQDTTLDGLLILPCYGSMTTDQQRRIFLPPPPGIRKCVISTNISATSLTIDGIRYVVDGGFVKQLNHNPRLGLDILEVVPISKSEALQRSGRAGRTASGKCFRIYSKDFWNQCMPDHVIPEIKRTSLTSVVLTLKCLAIHDVIRFPYLDPPNERLILEALKQLYQCDAIDRSGHVTRLGLSMVEFPLPPHLTCAVIRAASLDCEDLLLPIAAMLSVENVFIRPVDPEYQKEAEQKHRELAAKAGGFNDFATLAVIFEQCKSSGAPASWCQKHWIHWRCLFSAFRVEAQLRELIRKLKQQSDFPRETFEGPKHEVLRRCLCAGYFKNVARRSVGRTFCTMDGRGSPVHIHPSSALHEQETKLEWIIFHEVLVTTKVYARIVCPIRYEWVRDLLPKLHELNAHDLSSVARREMRDDARRKWTNKENVKQLKDGISKEVLKKMQRRNDDKSISDARARFLERKQQRIQDHSDTLKETG</sequence>
<proteinExistence type="evidence at transcript level"/>
<protein>
    <recommendedName>
        <fullName>Probable ATP-dependent RNA helicase DHX40</fullName>
        <ecNumber>3.6.4.13</ecNumber>
    </recommendedName>
    <alternativeName>
        <fullName>DEAH box protein 40</fullName>
    </alternativeName>
</protein>
<accession>Q5XI69</accession>
<name>DHX40_RAT</name>
<feature type="chain" id="PRO_0000252398" description="Probable ATP-dependent RNA helicase DHX40">
    <location>
        <begin position="1"/>
        <end position="779"/>
    </location>
</feature>
<feature type="domain" description="Helicase ATP-binding" evidence="2">
    <location>
        <begin position="63"/>
        <end position="231"/>
    </location>
</feature>
<feature type="domain" description="Helicase C-terminal" evidence="3">
    <location>
        <begin position="263"/>
        <end position="442"/>
    </location>
</feature>
<feature type="region of interest" description="Disordered" evidence="4">
    <location>
        <begin position="1"/>
        <end position="53"/>
    </location>
</feature>
<feature type="short sequence motif" description="DEAH box">
    <location>
        <begin position="173"/>
        <end position="176"/>
    </location>
</feature>
<feature type="compositionally biased region" description="Basic and acidic residues" evidence="4">
    <location>
        <begin position="13"/>
        <end position="41"/>
    </location>
</feature>
<feature type="compositionally biased region" description="Polar residues" evidence="4">
    <location>
        <begin position="42"/>
        <end position="53"/>
    </location>
</feature>
<feature type="binding site" evidence="2">
    <location>
        <begin position="76"/>
        <end position="83"/>
    </location>
    <ligand>
        <name>ATP</name>
        <dbReference type="ChEBI" id="CHEBI:30616"/>
    </ligand>
</feature>
<comment type="function">
    <text evidence="1">Probable ATP-dependent RNA helicase.</text>
</comment>
<comment type="catalytic activity">
    <reaction>
        <text>ATP + H2O = ADP + phosphate + H(+)</text>
        <dbReference type="Rhea" id="RHEA:13065"/>
        <dbReference type="ChEBI" id="CHEBI:15377"/>
        <dbReference type="ChEBI" id="CHEBI:15378"/>
        <dbReference type="ChEBI" id="CHEBI:30616"/>
        <dbReference type="ChEBI" id="CHEBI:43474"/>
        <dbReference type="ChEBI" id="CHEBI:456216"/>
        <dbReference type="EC" id="3.6.4.13"/>
    </reaction>
</comment>
<comment type="similarity">
    <text evidence="5">Belongs to the DEAD box helicase family. DEAH subfamily.</text>
</comment>